<protein>
    <recommendedName>
        <fullName evidence="1">Phosphoglycerate kinase</fullName>
        <ecNumber evidence="1">2.7.2.3</ecNumber>
    </recommendedName>
</protein>
<gene>
    <name evidence="1" type="primary">pgk</name>
    <name type="ordered locus">cgR_1635</name>
</gene>
<keyword id="KW-0067">ATP-binding</keyword>
<keyword id="KW-0963">Cytoplasm</keyword>
<keyword id="KW-0324">Glycolysis</keyword>
<keyword id="KW-0418">Kinase</keyword>
<keyword id="KW-0547">Nucleotide-binding</keyword>
<keyword id="KW-0808">Transferase</keyword>
<reference key="1">
    <citation type="journal article" date="2007" name="Microbiology">
        <title>Comparative analysis of the Corynebacterium glutamicum group and complete genome sequence of strain R.</title>
        <authorList>
            <person name="Yukawa H."/>
            <person name="Omumasaba C.A."/>
            <person name="Nonaka H."/>
            <person name="Kos P."/>
            <person name="Okai N."/>
            <person name="Suzuki N."/>
            <person name="Suda M."/>
            <person name="Tsuge Y."/>
            <person name="Watanabe J."/>
            <person name="Ikeda Y."/>
            <person name="Vertes A.A."/>
            <person name="Inui M."/>
        </authorList>
    </citation>
    <scope>NUCLEOTIDE SEQUENCE [LARGE SCALE GENOMIC DNA]</scope>
    <source>
        <strain>R</strain>
    </source>
</reference>
<dbReference type="EC" id="2.7.2.3" evidence="1"/>
<dbReference type="EMBL" id="AP009044">
    <property type="protein sequence ID" value="BAF54627.1"/>
    <property type="molecule type" value="Genomic_DNA"/>
</dbReference>
<dbReference type="RefSeq" id="WP_003856031.1">
    <property type="nucleotide sequence ID" value="NC_009342.1"/>
</dbReference>
<dbReference type="SMR" id="A4QEG1"/>
<dbReference type="KEGG" id="cgt:cgR_1635"/>
<dbReference type="HOGENOM" id="CLU_025427_0_2_11"/>
<dbReference type="PhylomeDB" id="A4QEG1"/>
<dbReference type="UniPathway" id="UPA00109">
    <property type="reaction ID" value="UER00185"/>
</dbReference>
<dbReference type="Proteomes" id="UP000006698">
    <property type="component" value="Chromosome"/>
</dbReference>
<dbReference type="GO" id="GO:0005829">
    <property type="term" value="C:cytosol"/>
    <property type="evidence" value="ECO:0007669"/>
    <property type="project" value="TreeGrafter"/>
</dbReference>
<dbReference type="GO" id="GO:0043531">
    <property type="term" value="F:ADP binding"/>
    <property type="evidence" value="ECO:0007669"/>
    <property type="project" value="TreeGrafter"/>
</dbReference>
<dbReference type="GO" id="GO:0005524">
    <property type="term" value="F:ATP binding"/>
    <property type="evidence" value="ECO:0007669"/>
    <property type="project" value="UniProtKB-KW"/>
</dbReference>
<dbReference type="GO" id="GO:0004618">
    <property type="term" value="F:phosphoglycerate kinase activity"/>
    <property type="evidence" value="ECO:0007669"/>
    <property type="project" value="UniProtKB-UniRule"/>
</dbReference>
<dbReference type="GO" id="GO:0006094">
    <property type="term" value="P:gluconeogenesis"/>
    <property type="evidence" value="ECO:0007669"/>
    <property type="project" value="TreeGrafter"/>
</dbReference>
<dbReference type="GO" id="GO:0006096">
    <property type="term" value="P:glycolytic process"/>
    <property type="evidence" value="ECO:0007669"/>
    <property type="project" value="UniProtKB-UniRule"/>
</dbReference>
<dbReference type="CDD" id="cd00318">
    <property type="entry name" value="Phosphoglycerate_kinase"/>
    <property type="match status" value="1"/>
</dbReference>
<dbReference type="FunFam" id="3.40.50.1260:FF:000006">
    <property type="entry name" value="Phosphoglycerate kinase"/>
    <property type="match status" value="1"/>
</dbReference>
<dbReference type="FunFam" id="3.40.50.1260:FF:000031">
    <property type="entry name" value="Phosphoglycerate kinase 1"/>
    <property type="match status" value="1"/>
</dbReference>
<dbReference type="Gene3D" id="3.40.50.1260">
    <property type="entry name" value="Phosphoglycerate kinase, N-terminal domain"/>
    <property type="match status" value="2"/>
</dbReference>
<dbReference type="HAMAP" id="MF_00145">
    <property type="entry name" value="Phosphoglyc_kinase"/>
    <property type="match status" value="1"/>
</dbReference>
<dbReference type="InterPro" id="IPR001576">
    <property type="entry name" value="Phosphoglycerate_kinase"/>
</dbReference>
<dbReference type="InterPro" id="IPR015911">
    <property type="entry name" value="Phosphoglycerate_kinase_CS"/>
</dbReference>
<dbReference type="InterPro" id="IPR015824">
    <property type="entry name" value="Phosphoglycerate_kinase_N"/>
</dbReference>
<dbReference type="InterPro" id="IPR036043">
    <property type="entry name" value="Phosphoglycerate_kinase_sf"/>
</dbReference>
<dbReference type="PANTHER" id="PTHR11406">
    <property type="entry name" value="PHOSPHOGLYCERATE KINASE"/>
    <property type="match status" value="1"/>
</dbReference>
<dbReference type="PANTHER" id="PTHR11406:SF23">
    <property type="entry name" value="PHOSPHOGLYCERATE KINASE 1, CHLOROPLASTIC-RELATED"/>
    <property type="match status" value="1"/>
</dbReference>
<dbReference type="Pfam" id="PF00162">
    <property type="entry name" value="PGK"/>
    <property type="match status" value="1"/>
</dbReference>
<dbReference type="PIRSF" id="PIRSF000724">
    <property type="entry name" value="Pgk"/>
    <property type="match status" value="1"/>
</dbReference>
<dbReference type="PRINTS" id="PR00477">
    <property type="entry name" value="PHGLYCKINASE"/>
</dbReference>
<dbReference type="SUPFAM" id="SSF53748">
    <property type="entry name" value="Phosphoglycerate kinase"/>
    <property type="match status" value="1"/>
</dbReference>
<dbReference type="PROSITE" id="PS00111">
    <property type="entry name" value="PGLYCERATE_KINASE"/>
    <property type="match status" value="1"/>
</dbReference>
<feature type="chain" id="PRO_1000009612" description="Phosphoglycerate kinase">
    <location>
        <begin position="1"/>
        <end position="405"/>
    </location>
</feature>
<feature type="binding site" evidence="1">
    <location>
        <begin position="24"/>
        <end position="26"/>
    </location>
    <ligand>
        <name>substrate</name>
    </ligand>
</feature>
<feature type="binding site" evidence="1">
    <location>
        <position position="40"/>
    </location>
    <ligand>
        <name>substrate</name>
    </ligand>
</feature>
<feature type="binding site" evidence="1">
    <location>
        <begin position="63"/>
        <end position="66"/>
    </location>
    <ligand>
        <name>substrate</name>
    </ligand>
</feature>
<feature type="binding site" evidence="1">
    <location>
        <position position="122"/>
    </location>
    <ligand>
        <name>substrate</name>
    </ligand>
</feature>
<feature type="binding site" evidence="1">
    <location>
        <position position="162"/>
    </location>
    <ligand>
        <name>substrate</name>
    </ligand>
</feature>
<feature type="binding site" evidence="1">
    <location>
        <position position="212"/>
    </location>
    <ligand>
        <name>ATP</name>
        <dbReference type="ChEBI" id="CHEBI:30616"/>
    </ligand>
</feature>
<feature type="binding site" evidence="1">
    <location>
        <position position="331"/>
    </location>
    <ligand>
        <name>ATP</name>
        <dbReference type="ChEBI" id="CHEBI:30616"/>
    </ligand>
</feature>
<feature type="binding site" evidence="1">
    <location>
        <begin position="361"/>
        <end position="364"/>
    </location>
    <ligand>
        <name>ATP</name>
        <dbReference type="ChEBI" id="CHEBI:30616"/>
    </ligand>
</feature>
<evidence type="ECO:0000255" key="1">
    <source>
        <dbReference type="HAMAP-Rule" id="MF_00145"/>
    </source>
</evidence>
<organism>
    <name type="scientific">Corynebacterium glutamicum (strain R)</name>
    <dbReference type="NCBI Taxonomy" id="340322"/>
    <lineage>
        <taxon>Bacteria</taxon>
        <taxon>Bacillati</taxon>
        <taxon>Actinomycetota</taxon>
        <taxon>Actinomycetes</taxon>
        <taxon>Mycobacteriales</taxon>
        <taxon>Corynebacteriaceae</taxon>
        <taxon>Corynebacterium</taxon>
    </lineage>
</organism>
<sequence length="405" mass="42755">MAVKTLKDLLDEGVDGRHVIVRSDFNVPLNDDREITDKGRIIASLPTLKALSEGGAKVIVMAHLGRPKGEVNEKYSLAPVAEALSDELGQYVALAADVVGEDAHERANGLTEGDILLLENVRFDPRETSKDEAERTAFAQELAALAADNGAFVSDGFGVVHRAQTSVYDIAKLLPHYAGGLVETEISVLEKIAESPEAPYVVVLGGSKVSDKIGVIEALAAKADKIIVGGGMCYTFLAAQGHNVQQSLLQEEMKETCTDLLARFGDKIVLPVDLVAASEFNKDAEKQIVDLDSIPEGWMSLDIGPESVKNFGEVLSTAKTIFWNGPMGVFEFAAFSEGTRGIAQAIIDATAGNDAFSVVGGGDSAASVRVLGLNEDGFSHISTGGGASLEYLEGKELPGVAILAQ</sequence>
<comment type="catalytic activity">
    <reaction evidence="1">
        <text>(2R)-3-phosphoglycerate + ATP = (2R)-3-phospho-glyceroyl phosphate + ADP</text>
        <dbReference type="Rhea" id="RHEA:14801"/>
        <dbReference type="ChEBI" id="CHEBI:30616"/>
        <dbReference type="ChEBI" id="CHEBI:57604"/>
        <dbReference type="ChEBI" id="CHEBI:58272"/>
        <dbReference type="ChEBI" id="CHEBI:456216"/>
        <dbReference type="EC" id="2.7.2.3"/>
    </reaction>
</comment>
<comment type="pathway">
    <text evidence="1">Carbohydrate degradation; glycolysis; pyruvate from D-glyceraldehyde 3-phosphate: step 2/5.</text>
</comment>
<comment type="subunit">
    <text evidence="1">Monomer.</text>
</comment>
<comment type="subcellular location">
    <subcellularLocation>
        <location evidence="1">Cytoplasm</location>
    </subcellularLocation>
</comment>
<comment type="similarity">
    <text evidence="1">Belongs to the phosphoglycerate kinase family.</text>
</comment>
<accession>A4QEG1</accession>
<name>PGK_CORGB</name>
<proteinExistence type="inferred from homology"/>